<comment type="function">
    <text evidence="1">Involved in allosteric regulation of aspartate carbamoyltransferase.</text>
</comment>
<comment type="cofactor">
    <cofactor evidence="1">
        <name>Zn(2+)</name>
        <dbReference type="ChEBI" id="CHEBI:29105"/>
    </cofactor>
    <text evidence="1">Binds 1 zinc ion per subunit.</text>
</comment>
<comment type="subunit">
    <text evidence="1">Contains catalytic and regulatory chains.</text>
</comment>
<comment type="similarity">
    <text evidence="1">Belongs to the PyrI family.</text>
</comment>
<reference key="1">
    <citation type="journal article" date="2007" name="PLoS ONE">
        <title>Analysis of the neurotoxin complex genes in Clostridium botulinum A1-A4 and B1 strains: BoNT/A3, /Ba4 and /B1 clusters are located within plasmids.</title>
        <authorList>
            <person name="Smith T.J."/>
            <person name="Hill K.K."/>
            <person name="Foley B.T."/>
            <person name="Detter J.C."/>
            <person name="Munk A.C."/>
            <person name="Bruce D.C."/>
            <person name="Doggett N.A."/>
            <person name="Smith L.A."/>
            <person name="Marks J.D."/>
            <person name="Xie G."/>
            <person name="Brettin T.S."/>
        </authorList>
    </citation>
    <scope>NUCLEOTIDE SEQUENCE [LARGE SCALE GENOMIC DNA]</scope>
    <source>
        <strain>Okra / Type B1</strain>
    </source>
</reference>
<keyword id="KW-0479">Metal-binding</keyword>
<keyword id="KW-0665">Pyrimidine biosynthesis</keyword>
<keyword id="KW-0862">Zinc</keyword>
<proteinExistence type="inferred from homology"/>
<feature type="chain" id="PRO_1000088821" description="Aspartate carbamoyltransferase regulatory chain">
    <location>
        <begin position="1"/>
        <end position="146"/>
    </location>
</feature>
<feature type="binding site" evidence="1">
    <location>
        <position position="102"/>
    </location>
    <ligand>
        <name>Zn(2+)</name>
        <dbReference type="ChEBI" id="CHEBI:29105"/>
    </ligand>
</feature>
<feature type="binding site" evidence="1">
    <location>
        <position position="107"/>
    </location>
    <ligand>
        <name>Zn(2+)</name>
        <dbReference type="ChEBI" id="CHEBI:29105"/>
    </ligand>
</feature>
<feature type="binding site" evidence="1">
    <location>
        <position position="131"/>
    </location>
    <ligand>
        <name>Zn(2+)</name>
        <dbReference type="ChEBI" id="CHEBI:29105"/>
    </ligand>
</feature>
<feature type="binding site" evidence="1">
    <location>
        <position position="134"/>
    </location>
    <ligand>
        <name>Zn(2+)</name>
        <dbReference type="ChEBI" id="CHEBI:29105"/>
    </ligand>
</feature>
<protein>
    <recommendedName>
        <fullName evidence="1">Aspartate carbamoyltransferase regulatory chain</fullName>
    </recommendedName>
</protein>
<organism>
    <name type="scientific">Clostridium botulinum (strain Okra / Type B1)</name>
    <dbReference type="NCBI Taxonomy" id="498213"/>
    <lineage>
        <taxon>Bacteria</taxon>
        <taxon>Bacillati</taxon>
        <taxon>Bacillota</taxon>
        <taxon>Clostridia</taxon>
        <taxon>Eubacteriales</taxon>
        <taxon>Clostridiaceae</taxon>
        <taxon>Clostridium</taxon>
    </lineage>
</organism>
<accession>B1INE6</accession>
<name>PYRI_CLOBK</name>
<dbReference type="EMBL" id="CP000939">
    <property type="protein sequence ID" value="ACA46360.1"/>
    <property type="molecule type" value="Genomic_DNA"/>
</dbReference>
<dbReference type="RefSeq" id="WP_003357668.1">
    <property type="nucleotide sequence ID" value="NC_010516.1"/>
</dbReference>
<dbReference type="SMR" id="B1INE6"/>
<dbReference type="KEGG" id="cbb:CLD_1291"/>
<dbReference type="HOGENOM" id="CLU_128576_0_0_9"/>
<dbReference type="Proteomes" id="UP000008541">
    <property type="component" value="Chromosome"/>
</dbReference>
<dbReference type="GO" id="GO:0009347">
    <property type="term" value="C:aspartate carbamoyltransferase complex"/>
    <property type="evidence" value="ECO:0007669"/>
    <property type="project" value="InterPro"/>
</dbReference>
<dbReference type="GO" id="GO:0046872">
    <property type="term" value="F:metal ion binding"/>
    <property type="evidence" value="ECO:0007669"/>
    <property type="project" value="UniProtKB-KW"/>
</dbReference>
<dbReference type="GO" id="GO:0006207">
    <property type="term" value="P:'de novo' pyrimidine nucleobase biosynthetic process"/>
    <property type="evidence" value="ECO:0007669"/>
    <property type="project" value="InterPro"/>
</dbReference>
<dbReference type="GO" id="GO:0006221">
    <property type="term" value="P:pyrimidine nucleotide biosynthetic process"/>
    <property type="evidence" value="ECO:0007669"/>
    <property type="project" value="UniProtKB-UniRule"/>
</dbReference>
<dbReference type="Gene3D" id="2.30.30.20">
    <property type="entry name" value="Aspartate carbamoyltransferase regulatory subunit, C-terminal domain"/>
    <property type="match status" value="1"/>
</dbReference>
<dbReference type="Gene3D" id="3.30.70.140">
    <property type="entry name" value="Aspartate carbamoyltransferase regulatory subunit, N-terminal domain"/>
    <property type="match status" value="1"/>
</dbReference>
<dbReference type="HAMAP" id="MF_00002">
    <property type="entry name" value="Asp_carb_tr_reg"/>
    <property type="match status" value="1"/>
</dbReference>
<dbReference type="InterPro" id="IPR020545">
    <property type="entry name" value="Asp_carbamoyltransf_reg_N"/>
</dbReference>
<dbReference type="InterPro" id="IPR002801">
    <property type="entry name" value="Asp_carbamoylTrfase_reg"/>
</dbReference>
<dbReference type="InterPro" id="IPR020542">
    <property type="entry name" value="Asp_carbamoyltrfase_reg_C"/>
</dbReference>
<dbReference type="InterPro" id="IPR036792">
    <property type="entry name" value="Asp_carbatrfase_reg_C_sf"/>
</dbReference>
<dbReference type="InterPro" id="IPR036793">
    <property type="entry name" value="Asp_carbatrfase_reg_N_sf"/>
</dbReference>
<dbReference type="NCBIfam" id="NF002063">
    <property type="entry name" value="PRK00893.1-3"/>
    <property type="match status" value="1"/>
</dbReference>
<dbReference type="PANTHER" id="PTHR35805">
    <property type="entry name" value="ASPARTATE CARBAMOYLTRANSFERASE REGULATORY CHAIN"/>
    <property type="match status" value="1"/>
</dbReference>
<dbReference type="PANTHER" id="PTHR35805:SF1">
    <property type="entry name" value="ASPARTATE CARBAMOYLTRANSFERASE REGULATORY CHAIN"/>
    <property type="match status" value="1"/>
</dbReference>
<dbReference type="Pfam" id="PF01948">
    <property type="entry name" value="PyrI"/>
    <property type="match status" value="1"/>
</dbReference>
<dbReference type="Pfam" id="PF02748">
    <property type="entry name" value="PyrI_C"/>
    <property type="match status" value="1"/>
</dbReference>
<dbReference type="SUPFAM" id="SSF57825">
    <property type="entry name" value="Aspartate carbamoyltransferase, Regulatory-chain, C-terminal domain"/>
    <property type="match status" value="1"/>
</dbReference>
<dbReference type="SUPFAM" id="SSF54893">
    <property type="entry name" value="Aspartate carbamoyltransferase, Regulatory-chain, N-terminal domain"/>
    <property type="match status" value="1"/>
</dbReference>
<sequence length="146" mass="16746">MLTINSIKNGIVIDHIQAGHGIKIFKYLGLEEADYRVALIMNAESSKLGKKDIIKIENIMEIDYKVLGFIDPTITIDVIENETIKEKIKLELPKTIENVIKCKNPRCITSIENYIPNEFYLVDEENGEYRCKYCDEIYSGGDINKL</sequence>
<gene>
    <name evidence="1" type="primary">pyrI</name>
    <name type="ordered locus">CLD_1291</name>
</gene>
<evidence type="ECO:0000255" key="1">
    <source>
        <dbReference type="HAMAP-Rule" id="MF_00002"/>
    </source>
</evidence>